<accession>Q0HR35</accession>
<dbReference type="EC" id="3.1.15.-" evidence="1"/>
<dbReference type="EMBL" id="CP000444">
    <property type="protein sequence ID" value="ABI44420.1"/>
    <property type="molecule type" value="Genomic_DNA"/>
</dbReference>
<dbReference type="SMR" id="Q0HR35"/>
<dbReference type="KEGG" id="shm:Shewmr7_3439"/>
<dbReference type="HOGENOM" id="CLU_064761_2_0_6"/>
<dbReference type="GO" id="GO:0005737">
    <property type="term" value="C:cytoplasm"/>
    <property type="evidence" value="ECO:0007669"/>
    <property type="project" value="UniProtKB-SubCell"/>
</dbReference>
<dbReference type="GO" id="GO:0000175">
    <property type="term" value="F:3'-5'-RNA exonuclease activity"/>
    <property type="evidence" value="ECO:0007669"/>
    <property type="project" value="InterPro"/>
</dbReference>
<dbReference type="GO" id="GO:0003676">
    <property type="term" value="F:nucleic acid binding"/>
    <property type="evidence" value="ECO:0007669"/>
    <property type="project" value="InterPro"/>
</dbReference>
<dbReference type="GO" id="GO:0006259">
    <property type="term" value="P:DNA metabolic process"/>
    <property type="evidence" value="ECO:0007669"/>
    <property type="project" value="UniProtKB-ARBA"/>
</dbReference>
<dbReference type="CDD" id="cd06135">
    <property type="entry name" value="Orn"/>
    <property type="match status" value="1"/>
</dbReference>
<dbReference type="FunFam" id="3.30.420.10:FF:000003">
    <property type="entry name" value="Oligoribonuclease"/>
    <property type="match status" value="1"/>
</dbReference>
<dbReference type="Gene3D" id="3.30.420.10">
    <property type="entry name" value="Ribonuclease H-like superfamily/Ribonuclease H"/>
    <property type="match status" value="1"/>
</dbReference>
<dbReference type="HAMAP" id="MF_00045">
    <property type="entry name" value="Oligoribonuclease"/>
    <property type="match status" value="1"/>
</dbReference>
<dbReference type="InterPro" id="IPR013520">
    <property type="entry name" value="Exonuclease_RNaseT/DNA_pol3"/>
</dbReference>
<dbReference type="InterPro" id="IPR022894">
    <property type="entry name" value="Oligoribonuclease"/>
</dbReference>
<dbReference type="InterPro" id="IPR012337">
    <property type="entry name" value="RNaseH-like_sf"/>
</dbReference>
<dbReference type="InterPro" id="IPR036397">
    <property type="entry name" value="RNaseH_sf"/>
</dbReference>
<dbReference type="NCBIfam" id="NF003765">
    <property type="entry name" value="PRK05359.1"/>
    <property type="match status" value="1"/>
</dbReference>
<dbReference type="PANTHER" id="PTHR11046">
    <property type="entry name" value="OLIGORIBONUCLEASE, MITOCHONDRIAL"/>
    <property type="match status" value="1"/>
</dbReference>
<dbReference type="PANTHER" id="PTHR11046:SF0">
    <property type="entry name" value="OLIGORIBONUCLEASE, MITOCHONDRIAL"/>
    <property type="match status" value="1"/>
</dbReference>
<dbReference type="Pfam" id="PF00929">
    <property type="entry name" value="RNase_T"/>
    <property type="match status" value="1"/>
</dbReference>
<dbReference type="SMART" id="SM00479">
    <property type="entry name" value="EXOIII"/>
    <property type="match status" value="1"/>
</dbReference>
<dbReference type="SUPFAM" id="SSF53098">
    <property type="entry name" value="Ribonuclease H-like"/>
    <property type="match status" value="1"/>
</dbReference>
<evidence type="ECO:0000255" key="1">
    <source>
        <dbReference type="HAMAP-Rule" id="MF_00045"/>
    </source>
</evidence>
<keyword id="KW-0963">Cytoplasm</keyword>
<keyword id="KW-0269">Exonuclease</keyword>
<keyword id="KW-0378">Hydrolase</keyword>
<keyword id="KW-0540">Nuclease</keyword>
<gene>
    <name evidence="1" type="primary">orn</name>
    <name type="ordered locus">Shewmr7_3439</name>
</gene>
<sequence length="181" mass="20650">MAADANNLIWIDLEMTGLEPDVDRVIEIATLVTDQELNIIGQGPVIAIHQSDEVLAAMDDWNQKHHGESGLIDRVRASQVNEAQAVAQTIAFLEQYVPKGASPMCGNSVGQDRRFLNRYMRELEDYFHYRNLDVSTVKELVKRWSPETMAGFKKQNTHQALQDIQESIAELQYYRSKVFKI</sequence>
<name>ORN_SHESR</name>
<protein>
    <recommendedName>
        <fullName evidence="1">Oligoribonuclease</fullName>
        <ecNumber evidence="1">3.1.15.-</ecNumber>
    </recommendedName>
</protein>
<feature type="chain" id="PRO_1000004291" description="Oligoribonuclease">
    <location>
        <begin position="1"/>
        <end position="181"/>
    </location>
</feature>
<feature type="domain" description="Exonuclease" evidence="1">
    <location>
        <begin position="8"/>
        <end position="171"/>
    </location>
</feature>
<feature type="active site" evidence="1">
    <location>
        <position position="129"/>
    </location>
</feature>
<reference key="1">
    <citation type="submission" date="2006-08" db="EMBL/GenBank/DDBJ databases">
        <title>Complete sequence of chromosome 1 of Shewanella sp. MR-7.</title>
        <authorList>
            <person name="Copeland A."/>
            <person name="Lucas S."/>
            <person name="Lapidus A."/>
            <person name="Barry K."/>
            <person name="Detter J.C."/>
            <person name="Glavina del Rio T."/>
            <person name="Hammon N."/>
            <person name="Israni S."/>
            <person name="Dalin E."/>
            <person name="Tice H."/>
            <person name="Pitluck S."/>
            <person name="Kiss H."/>
            <person name="Brettin T."/>
            <person name="Bruce D."/>
            <person name="Han C."/>
            <person name="Tapia R."/>
            <person name="Gilna P."/>
            <person name="Schmutz J."/>
            <person name="Larimer F."/>
            <person name="Land M."/>
            <person name="Hauser L."/>
            <person name="Kyrpides N."/>
            <person name="Mikhailova N."/>
            <person name="Nealson K."/>
            <person name="Konstantinidis K."/>
            <person name="Klappenbach J."/>
            <person name="Tiedje J."/>
            <person name="Richardson P."/>
        </authorList>
    </citation>
    <scope>NUCLEOTIDE SEQUENCE [LARGE SCALE GENOMIC DNA]</scope>
    <source>
        <strain>MR-7</strain>
    </source>
</reference>
<organism>
    <name type="scientific">Shewanella sp. (strain MR-7)</name>
    <dbReference type="NCBI Taxonomy" id="60481"/>
    <lineage>
        <taxon>Bacteria</taxon>
        <taxon>Pseudomonadati</taxon>
        <taxon>Pseudomonadota</taxon>
        <taxon>Gammaproteobacteria</taxon>
        <taxon>Alteromonadales</taxon>
        <taxon>Shewanellaceae</taxon>
        <taxon>Shewanella</taxon>
    </lineage>
</organism>
<comment type="function">
    <text evidence="1">3'-to-5' exoribonuclease specific for small oligoribonucleotides.</text>
</comment>
<comment type="subcellular location">
    <subcellularLocation>
        <location evidence="1">Cytoplasm</location>
    </subcellularLocation>
</comment>
<comment type="similarity">
    <text evidence="1">Belongs to the oligoribonuclease family.</text>
</comment>
<proteinExistence type="inferred from homology"/>